<keyword id="KW-1072">Activation of host autophagy by virus</keyword>
<keyword id="KW-0106">Calcium</keyword>
<keyword id="KW-0260">Enterotoxin</keyword>
<keyword id="KW-0325">Glycoprotein</keyword>
<keyword id="KW-1038">Host endoplasmic reticulum</keyword>
<keyword id="KW-1043">Host membrane</keyword>
<keyword id="KW-0945">Host-virus interaction</keyword>
<keyword id="KW-0407">Ion channel</keyword>
<keyword id="KW-0406">Ion transport</keyword>
<keyword id="KW-0472">Membrane</keyword>
<keyword id="KW-0479">Metal-binding</keyword>
<keyword id="KW-0964">Secreted</keyword>
<keyword id="KW-0735">Signal-anchor</keyword>
<keyword id="KW-0800">Toxin</keyword>
<keyword id="KW-0812">Transmembrane</keyword>
<keyword id="KW-1133">Transmembrane helix</keyword>
<keyword id="KW-0813">Transport</keyword>
<keyword id="KW-1182">Viral ion channel</keyword>
<keyword id="KW-0843">Virulence</keyword>
<evidence type="ECO:0000255" key="1">
    <source>
        <dbReference type="HAMAP-Rule" id="MF_04091"/>
    </source>
</evidence>
<feature type="chain" id="PRO_0000369482" description="Non-structural glycoprotein 4">
    <location>
        <begin position="1"/>
        <end position="175"/>
    </location>
</feature>
<feature type="topological domain" description="Lumenal" evidence="1">
    <location>
        <begin position="1"/>
        <end position="28"/>
    </location>
</feature>
<feature type="transmembrane region" description="Helical; Signal-anchor for type III membrane protein" evidence="1">
    <location>
        <begin position="29"/>
        <end position="51"/>
    </location>
</feature>
<feature type="topological domain" description="Cytoplasmic" evidence="1">
    <location>
        <begin position="52"/>
        <end position="175"/>
    </location>
</feature>
<feature type="binding site" evidence="1">
    <location>
        <position position="120"/>
    </location>
    <ligand>
        <name>Ca(2+)</name>
        <dbReference type="ChEBI" id="CHEBI:29108"/>
    </ligand>
</feature>
<feature type="binding site" evidence="1">
    <location>
        <position position="123"/>
    </location>
    <ligand>
        <name>Ca(2+)</name>
        <dbReference type="ChEBI" id="CHEBI:29108"/>
    </ligand>
</feature>
<feature type="glycosylation site" description="N-linked (GlcNAc...) asparagine; by host" evidence="1">
    <location>
        <position position="8"/>
    </location>
</feature>
<feature type="glycosylation site" description="N-linked (GlcNAc...) asparagine; by host" evidence="1">
    <location>
        <position position="18"/>
    </location>
</feature>
<protein>
    <recommendedName>
        <fullName evidence="1">Non-structural glycoprotein 4</fullName>
        <shortName evidence="1">NSP4</shortName>
    </recommendedName>
    <alternativeName>
        <fullName evidence="1">NCVP5</fullName>
    </alternativeName>
    <alternativeName>
        <fullName evidence="1">NS28</fullName>
    </alternativeName>
</protein>
<proteinExistence type="inferred from homology"/>
<dbReference type="EMBL" id="AB008235">
    <property type="protein sequence ID" value="BAA77523.1"/>
    <property type="molecule type" value="Genomic_RNA"/>
</dbReference>
<dbReference type="SMR" id="Q9WAI7"/>
<dbReference type="GO" id="GO:0005576">
    <property type="term" value="C:extracellular region"/>
    <property type="evidence" value="ECO:0007669"/>
    <property type="project" value="UniProtKB-SubCell"/>
</dbReference>
<dbReference type="GO" id="GO:0044155">
    <property type="term" value="C:host caveola"/>
    <property type="evidence" value="ECO:0007669"/>
    <property type="project" value="UniProtKB-SubCell"/>
</dbReference>
<dbReference type="GO" id="GO:0044169">
    <property type="term" value="C:host cell rough endoplasmic reticulum membrane"/>
    <property type="evidence" value="ECO:0007669"/>
    <property type="project" value="UniProtKB-SubCell"/>
</dbReference>
<dbReference type="GO" id="GO:0016020">
    <property type="term" value="C:membrane"/>
    <property type="evidence" value="ECO:0007669"/>
    <property type="project" value="UniProtKB-UniRule"/>
</dbReference>
<dbReference type="GO" id="GO:0015267">
    <property type="term" value="F:channel activity"/>
    <property type="evidence" value="ECO:0007669"/>
    <property type="project" value="UniProtKB-KW"/>
</dbReference>
<dbReference type="GO" id="GO:0046872">
    <property type="term" value="F:metal ion binding"/>
    <property type="evidence" value="ECO:0007669"/>
    <property type="project" value="UniProtKB-UniRule"/>
</dbReference>
<dbReference type="GO" id="GO:0090729">
    <property type="term" value="F:toxin activity"/>
    <property type="evidence" value="ECO:0007669"/>
    <property type="project" value="UniProtKB-UniRule"/>
</dbReference>
<dbReference type="GO" id="GO:0034220">
    <property type="term" value="P:monoatomic ion transmembrane transport"/>
    <property type="evidence" value="ECO:0007669"/>
    <property type="project" value="UniProtKB-KW"/>
</dbReference>
<dbReference type="GO" id="GO:0039520">
    <property type="term" value="P:symbiont-mediated activation of host autophagy"/>
    <property type="evidence" value="ECO:0007669"/>
    <property type="project" value="UniProtKB-KW"/>
</dbReference>
<dbReference type="GO" id="GO:0016032">
    <property type="term" value="P:viral process"/>
    <property type="evidence" value="ECO:0007669"/>
    <property type="project" value="UniProtKB-UniRule"/>
</dbReference>
<dbReference type="Gene3D" id="1.20.5.430">
    <property type="match status" value="1"/>
</dbReference>
<dbReference type="HAMAP" id="MF_04091">
    <property type="entry name" value="ROTA_NSP4"/>
    <property type="match status" value="1"/>
</dbReference>
<dbReference type="InterPro" id="IPR002107">
    <property type="entry name" value="Rotavirus_NSP4"/>
</dbReference>
<dbReference type="Pfam" id="PF01452">
    <property type="entry name" value="Rota_NSP4"/>
    <property type="match status" value="1"/>
</dbReference>
<dbReference type="SUPFAM" id="SSF58030">
    <property type="entry name" value="Rotavirus nonstructural proteins"/>
    <property type="match status" value="1"/>
</dbReference>
<organism>
    <name type="scientific">Rotavirus A (strain RVA/Human/Japan/MO/1982/G3P1A[8])</name>
    <name type="common">RV-A</name>
    <dbReference type="NCBI Taxonomy" id="10956"/>
    <lineage>
        <taxon>Viruses</taxon>
        <taxon>Riboviria</taxon>
        <taxon>Orthornavirae</taxon>
        <taxon>Duplornaviricota</taxon>
        <taxon>Resentoviricetes</taxon>
        <taxon>Reovirales</taxon>
        <taxon>Sedoreoviridae</taxon>
        <taxon>Rotavirus</taxon>
        <taxon>Rotavirus A</taxon>
    </lineage>
</organism>
<sequence>MDKLADLNYTLSVVTLMNDTLHSIIQDPGMAYFPYVASVLTVLFALHKASIPTMKMALKTSKCSYKVIKYCIVPIINTLFKLAGFQEPITTKDEIEQPMDGIVKEIRRPLEMIDKLTTPEIEQVELLKSLHDHLITRPVDVIDMSKEFNQKNIKTLDEWDSGKNPYEPSEVTASM</sequence>
<organismHost>
    <name type="scientific">Homo sapiens</name>
    <name type="common">Human</name>
    <dbReference type="NCBI Taxonomy" id="9606"/>
</organismHost>
<reference key="1">
    <citation type="journal article" date="1999" name="Microbiol. Immunol.">
        <title>Genetic variation in the VP4 and NSP4 genes of human rotavirus serotype 3 (G3 type) isolated in China and Japan.</title>
        <authorList>
            <person name="Cao X.R."/>
            <person name="Akihara S."/>
            <person name="Fang Z.Y."/>
            <person name="Nakagomi O."/>
            <person name="Ushijima H."/>
        </authorList>
    </citation>
    <scope>NUCLEOTIDE SEQUENCE [GENOMIC RNA]</scope>
</reference>
<accession>Q9WAI7</accession>
<name>NSP4_ROTHO</name>
<comment type="function">
    <text evidence="1">Plays an essential role in the virus replication cycle by acting as a viroporin. Creates a pore in the host endoplasmic reticulum and as a consequence releases Ca(2+) in the cytoplasm of infected cell. In turn, high levels of cytoplasmic calcium trigger membrane trafficking and transport of viral ER-associated proteins to viroplasms, sites of viral genome replication and immature particle assembly.</text>
</comment>
<comment type="function">
    <text evidence="1">The secreted form acts as an enterotoxin that causes phospholipase C-dependent elevation of the intracellular calcium concentration in host intestinal mucosa cells. Increased concentration of intracellular calcium disrupts the cytoskeleton and the tight junctions, raising the paracellular permeability. Potentiates chloride ion secretion through a calcium ion-dependent signaling pathway, inducing age-dependent diarrhea. To perform this enterotoxigenic role in vivo, NSP4 is released from infected enterocytes in a soluble form capable of diffusing within the intestinal lumen and interacting with host plasma membrane receptors on neighboring epithelial cells such as integrins ITGA1/ITGB1 and ITGA2/ITGB1.</text>
</comment>
<comment type="subunit">
    <text evidence="1">Homotetramer. Interacts with the immature particle in the viroplasm. Interacts with host CAV1, early and late in infection. Interacts with host integrin ITGA1/ITGB1 heterodimer. Interacts with host integrin ITGA2/ITGB1 heterodimer. Interaction with microtubules blocks trafficking to the Golgi apparatus.</text>
</comment>
<comment type="subcellular location">
    <subcellularLocation>
        <location evidence="1">Host rough endoplasmic reticulum membrane</location>
        <topology evidence="1">Single-pass type III membrane protein</topology>
    </subcellularLocation>
    <subcellularLocation>
        <location evidence="1">Host membrane</location>
        <location evidence="1">Host caveola</location>
        <topology evidence="1">Single-pass type III membrane protein</topology>
    </subcellularLocation>
    <subcellularLocation>
        <location evidence="1">Secreted</location>
    </subcellularLocation>
    <text evidence="1">NSP4 also localizes in vesicular structures which contain autophagosomal markers and associate with viroplasms in virus-infected cells. Additionally, a soluble form of glycosylated NSP4 is secreted despite retention of its transmembrane domain.</text>
</comment>
<comment type="domain">
    <text evidence="1">Binds 1 calcium ion per tetramer.</text>
</comment>
<comment type="PTM">
    <text evidence="1">The N-glycosyl content is primarily Man(9)GlcNAc, with a small amount of Man(8)GlcNAc.</text>
</comment>
<comment type="similarity">
    <text evidence="1">Belongs to the rotavirus NSP4 family.</text>
</comment>